<feature type="chain" id="PRO_0000359289" description="5'-methylthioadenosine/S-adenosylhomocysteine nucleosidase">
    <location>
        <begin position="1"/>
        <end position="232"/>
    </location>
</feature>
<feature type="active site" description="Proton acceptor" evidence="1">
    <location>
        <position position="12"/>
    </location>
</feature>
<feature type="active site" description="Proton donor" evidence="1">
    <location>
        <position position="197"/>
    </location>
</feature>
<feature type="binding site" evidence="1">
    <location>
        <position position="78"/>
    </location>
    <ligand>
        <name>substrate</name>
    </ligand>
</feature>
<feature type="binding site" evidence="1">
    <location>
        <position position="152"/>
    </location>
    <ligand>
        <name>substrate</name>
    </ligand>
</feature>
<feature type="binding site" evidence="1">
    <location>
        <begin position="173"/>
        <end position="174"/>
    </location>
    <ligand>
        <name>substrate</name>
    </ligand>
</feature>
<organism>
    <name type="scientific">Cronobacter sakazakii (strain ATCC BAA-894)</name>
    <name type="common">Enterobacter sakazakii</name>
    <dbReference type="NCBI Taxonomy" id="290339"/>
    <lineage>
        <taxon>Bacteria</taxon>
        <taxon>Pseudomonadati</taxon>
        <taxon>Pseudomonadota</taxon>
        <taxon>Gammaproteobacteria</taxon>
        <taxon>Enterobacterales</taxon>
        <taxon>Enterobacteriaceae</taxon>
        <taxon>Cronobacter</taxon>
    </lineage>
</organism>
<gene>
    <name evidence="1" type="primary">mtnN</name>
    <name type="ordered locus">ESA_03181</name>
</gene>
<evidence type="ECO:0000255" key="1">
    <source>
        <dbReference type="HAMAP-Rule" id="MF_01684"/>
    </source>
</evidence>
<dbReference type="EC" id="3.2.2.9" evidence="1"/>
<dbReference type="EMBL" id="CP000783">
    <property type="protein sequence ID" value="ABU78403.1"/>
    <property type="molecule type" value="Genomic_DNA"/>
</dbReference>
<dbReference type="RefSeq" id="WP_007896708.1">
    <property type="nucleotide sequence ID" value="NC_009778.1"/>
</dbReference>
<dbReference type="SMR" id="A7MGS5"/>
<dbReference type="GeneID" id="56731871"/>
<dbReference type="KEGG" id="esa:ESA_03181"/>
<dbReference type="HOGENOM" id="CLU_031248_2_2_6"/>
<dbReference type="UniPathway" id="UPA00904">
    <property type="reaction ID" value="UER00871"/>
</dbReference>
<dbReference type="Proteomes" id="UP000000260">
    <property type="component" value="Chromosome"/>
</dbReference>
<dbReference type="GO" id="GO:0005829">
    <property type="term" value="C:cytosol"/>
    <property type="evidence" value="ECO:0007669"/>
    <property type="project" value="TreeGrafter"/>
</dbReference>
<dbReference type="GO" id="GO:0008782">
    <property type="term" value="F:adenosylhomocysteine nucleosidase activity"/>
    <property type="evidence" value="ECO:0007669"/>
    <property type="project" value="UniProtKB-UniRule"/>
</dbReference>
<dbReference type="GO" id="GO:0008930">
    <property type="term" value="F:methylthioadenosine nucleosidase activity"/>
    <property type="evidence" value="ECO:0007669"/>
    <property type="project" value="UniProtKB-UniRule"/>
</dbReference>
<dbReference type="GO" id="GO:0019509">
    <property type="term" value="P:L-methionine salvage from methylthioadenosine"/>
    <property type="evidence" value="ECO:0007669"/>
    <property type="project" value="UniProtKB-UniRule"/>
</dbReference>
<dbReference type="GO" id="GO:0019284">
    <property type="term" value="P:L-methionine salvage from S-adenosylmethionine"/>
    <property type="evidence" value="ECO:0007669"/>
    <property type="project" value="TreeGrafter"/>
</dbReference>
<dbReference type="GO" id="GO:0046124">
    <property type="term" value="P:purine deoxyribonucleoside catabolic process"/>
    <property type="evidence" value="ECO:0007669"/>
    <property type="project" value="UniProtKB-UniRule"/>
</dbReference>
<dbReference type="CDD" id="cd09008">
    <property type="entry name" value="MTAN"/>
    <property type="match status" value="1"/>
</dbReference>
<dbReference type="FunFam" id="3.40.50.1580:FF:000001">
    <property type="entry name" value="MTA/SAH nucleosidase family protein"/>
    <property type="match status" value="1"/>
</dbReference>
<dbReference type="Gene3D" id="3.40.50.1580">
    <property type="entry name" value="Nucleoside phosphorylase domain"/>
    <property type="match status" value="1"/>
</dbReference>
<dbReference type="HAMAP" id="MF_01684">
    <property type="entry name" value="Salvage_MtnN"/>
    <property type="match status" value="1"/>
</dbReference>
<dbReference type="InterPro" id="IPR010049">
    <property type="entry name" value="MTA_SAH_Nsdase"/>
</dbReference>
<dbReference type="InterPro" id="IPR000845">
    <property type="entry name" value="Nucleoside_phosphorylase_d"/>
</dbReference>
<dbReference type="InterPro" id="IPR035994">
    <property type="entry name" value="Nucleoside_phosphorylase_sf"/>
</dbReference>
<dbReference type="NCBIfam" id="TIGR01704">
    <property type="entry name" value="MTA_SAH-Nsdase"/>
    <property type="match status" value="1"/>
</dbReference>
<dbReference type="NCBIfam" id="NF004079">
    <property type="entry name" value="PRK05584.1"/>
    <property type="match status" value="1"/>
</dbReference>
<dbReference type="PANTHER" id="PTHR46832">
    <property type="entry name" value="5'-METHYLTHIOADENOSINE/S-ADENOSYLHOMOCYSTEINE NUCLEOSIDASE"/>
    <property type="match status" value="1"/>
</dbReference>
<dbReference type="PANTHER" id="PTHR46832:SF1">
    <property type="entry name" value="5'-METHYLTHIOADENOSINE_S-ADENOSYLHOMOCYSTEINE NUCLEOSIDASE"/>
    <property type="match status" value="1"/>
</dbReference>
<dbReference type="Pfam" id="PF01048">
    <property type="entry name" value="PNP_UDP_1"/>
    <property type="match status" value="1"/>
</dbReference>
<dbReference type="SUPFAM" id="SSF53167">
    <property type="entry name" value="Purine and uridine phosphorylases"/>
    <property type="match status" value="1"/>
</dbReference>
<sequence length="232" mass="24494">MKAGIIGAMEEEVTLLRDKIDNRQTLTIAGCEIYTGTLNGVDVALLKSGIGKVSAAMGATLLLEHCKPDVIINTGSAGGLAPSLKVGDIVVSDEVRYHDADVTAFGYEYGQMAGCPAAFKADEKLIAAAQETIEKLNLHAVRGLVVSGDAFINGSVNLAKIRHNFPQAIAVEMEATAIGHVCHNFGVPFVVVRAISDVADQQSHLSFEEFLAVAAKQSSLMVETLLTSLNRG</sequence>
<proteinExistence type="inferred from homology"/>
<keyword id="KW-0028">Amino-acid biosynthesis</keyword>
<keyword id="KW-0378">Hydrolase</keyword>
<keyword id="KW-0486">Methionine biosynthesis</keyword>
<keyword id="KW-1185">Reference proteome</keyword>
<reference key="1">
    <citation type="journal article" date="2010" name="PLoS ONE">
        <title>Genome sequence of Cronobacter sakazakii BAA-894 and comparative genomic hybridization analysis with other Cronobacter species.</title>
        <authorList>
            <person name="Kucerova E."/>
            <person name="Clifton S.W."/>
            <person name="Xia X.Q."/>
            <person name="Long F."/>
            <person name="Porwollik S."/>
            <person name="Fulton L."/>
            <person name="Fronick C."/>
            <person name="Minx P."/>
            <person name="Kyung K."/>
            <person name="Warren W."/>
            <person name="Fulton R."/>
            <person name="Feng D."/>
            <person name="Wollam A."/>
            <person name="Shah N."/>
            <person name="Bhonagiri V."/>
            <person name="Nash W.E."/>
            <person name="Hallsworth-Pepin K."/>
            <person name="Wilson R.K."/>
            <person name="McClelland M."/>
            <person name="Forsythe S.J."/>
        </authorList>
    </citation>
    <scope>NUCLEOTIDE SEQUENCE [LARGE SCALE GENOMIC DNA]</scope>
    <source>
        <strain>ATCC BAA-894</strain>
    </source>
</reference>
<name>MTNN_CROS8</name>
<accession>A7MGS5</accession>
<protein>
    <recommendedName>
        <fullName evidence="1">5'-methylthioadenosine/S-adenosylhomocysteine nucleosidase</fullName>
        <shortName evidence="1">MTA/SAH nucleosidase</shortName>
        <shortName evidence="1">MTAN</shortName>
        <ecNumber evidence="1">3.2.2.9</ecNumber>
    </recommendedName>
    <alternativeName>
        <fullName evidence="1">5'-deoxyadenosine nucleosidase</fullName>
        <shortName evidence="1">DOA nucleosidase</shortName>
        <shortName evidence="1">dAdo nucleosidase</shortName>
    </alternativeName>
    <alternativeName>
        <fullName evidence="1">5'-methylthioadenosine nucleosidase</fullName>
        <shortName evidence="1">MTA nucleosidase</shortName>
    </alternativeName>
    <alternativeName>
        <fullName evidence="1">S-adenosylhomocysteine nucleosidase</fullName>
        <shortName evidence="1">AdoHcy nucleosidase</shortName>
        <shortName evidence="1">SAH nucleosidase</shortName>
        <shortName evidence="1">SRH nucleosidase</shortName>
    </alternativeName>
</protein>
<comment type="function">
    <text evidence="1">Catalyzes the irreversible cleavage of the glycosidic bond in both 5'-methylthioadenosine (MTA) and S-adenosylhomocysteine (SAH/AdoHcy) to adenine and the corresponding thioribose, 5'-methylthioribose and S-ribosylhomocysteine, respectively. Also cleaves 5'-deoxyadenosine, a toxic by-product of radical S-adenosylmethionine (SAM) enzymes, into 5-deoxyribose and adenine. Thus, is required for in vivo function of the radical SAM enzymes biotin synthase and lipoic acid synthase, that are inhibited by 5'-deoxyadenosine accumulation.</text>
</comment>
<comment type="catalytic activity">
    <reaction evidence="1">
        <text>S-adenosyl-L-homocysteine + H2O = S-(5-deoxy-D-ribos-5-yl)-L-homocysteine + adenine</text>
        <dbReference type="Rhea" id="RHEA:17805"/>
        <dbReference type="ChEBI" id="CHEBI:15377"/>
        <dbReference type="ChEBI" id="CHEBI:16708"/>
        <dbReference type="ChEBI" id="CHEBI:57856"/>
        <dbReference type="ChEBI" id="CHEBI:58195"/>
        <dbReference type="EC" id="3.2.2.9"/>
    </reaction>
</comment>
<comment type="catalytic activity">
    <reaction evidence="1">
        <text>S-methyl-5'-thioadenosine + H2O = 5-(methylsulfanyl)-D-ribose + adenine</text>
        <dbReference type="Rhea" id="RHEA:13617"/>
        <dbReference type="ChEBI" id="CHEBI:15377"/>
        <dbReference type="ChEBI" id="CHEBI:16708"/>
        <dbReference type="ChEBI" id="CHEBI:17509"/>
        <dbReference type="ChEBI" id="CHEBI:78440"/>
        <dbReference type="EC" id="3.2.2.9"/>
    </reaction>
</comment>
<comment type="catalytic activity">
    <reaction evidence="1">
        <text>5'-deoxyadenosine + H2O = 5-deoxy-D-ribose + adenine</text>
        <dbReference type="Rhea" id="RHEA:29859"/>
        <dbReference type="ChEBI" id="CHEBI:15377"/>
        <dbReference type="ChEBI" id="CHEBI:16708"/>
        <dbReference type="ChEBI" id="CHEBI:17319"/>
        <dbReference type="ChEBI" id="CHEBI:149540"/>
        <dbReference type="EC" id="3.2.2.9"/>
    </reaction>
    <physiologicalReaction direction="left-to-right" evidence="1">
        <dbReference type="Rhea" id="RHEA:29860"/>
    </physiologicalReaction>
</comment>
<comment type="pathway">
    <text evidence="1">Amino-acid biosynthesis; L-methionine biosynthesis via salvage pathway; S-methyl-5-thio-alpha-D-ribose 1-phosphate from S-methyl-5'-thioadenosine (hydrolase route): step 1/2.</text>
</comment>
<comment type="subunit">
    <text evidence="1">Homodimer.</text>
</comment>
<comment type="similarity">
    <text evidence="1">Belongs to the PNP/UDP phosphorylase family. MtnN subfamily.</text>
</comment>